<comment type="function">
    <text evidence="1">Required for accurate and efficient protein synthesis under certain stress conditions. May act as a fidelity factor of the translation reaction, by catalyzing a one-codon backward translocation of tRNAs on improperly translocated ribosomes. Back-translocation proceeds from a post-translocation (POST) complex to a pre-translocation (PRE) complex, thus giving elongation factor G a second chance to translocate the tRNAs correctly. Binds to ribosomes in a GTP-dependent manner.</text>
</comment>
<comment type="catalytic activity">
    <reaction evidence="1">
        <text>GTP + H2O = GDP + phosphate + H(+)</text>
        <dbReference type="Rhea" id="RHEA:19669"/>
        <dbReference type="ChEBI" id="CHEBI:15377"/>
        <dbReference type="ChEBI" id="CHEBI:15378"/>
        <dbReference type="ChEBI" id="CHEBI:37565"/>
        <dbReference type="ChEBI" id="CHEBI:43474"/>
        <dbReference type="ChEBI" id="CHEBI:58189"/>
        <dbReference type="EC" id="3.6.5.n1"/>
    </reaction>
</comment>
<comment type="subcellular location">
    <subcellularLocation>
        <location evidence="1">Cell inner membrane</location>
        <topology evidence="1">Peripheral membrane protein</topology>
        <orientation evidence="1">Cytoplasmic side</orientation>
    </subcellularLocation>
</comment>
<comment type="similarity">
    <text evidence="1">Belongs to the TRAFAC class translation factor GTPase superfamily. Classic translation factor GTPase family. LepA subfamily.</text>
</comment>
<feature type="chain" id="PRO_1000032053" description="Elongation factor 4">
    <location>
        <begin position="1"/>
        <end position="596"/>
    </location>
</feature>
<feature type="domain" description="tr-type G">
    <location>
        <begin position="2"/>
        <end position="184"/>
    </location>
</feature>
<feature type="binding site" evidence="1">
    <location>
        <begin position="14"/>
        <end position="19"/>
    </location>
    <ligand>
        <name>GTP</name>
        <dbReference type="ChEBI" id="CHEBI:37565"/>
    </ligand>
</feature>
<feature type="binding site" evidence="1">
    <location>
        <begin position="131"/>
        <end position="134"/>
    </location>
    <ligand>
        <name>GTP</name>
        <dbReference type="ChEBI" id="CHEBI:37565"/>
    </ligand>
</feature>
<accession>A4Y4K2</accession>
<reference key="1">
    <citation type="submission" date="2007-04" db="EMBL/GenBank/DDBJ databases">
        <title>Complete sequence of Shewanella putrefaciens CN-32.</title>
        <authorList>
            <consortium name="US DOE Joint Genome Institute"/>
            <person name="Copeland A."/>
            <person name="Lucas S."/>
            <person name="Lapidus A."/>
            <person name="Barry K."/>
            <person name="Detter J.C."/>
            <person name="Glavina del Rio T."/>
            <person name="Hammon N."/>
            <person name="Israni S."/>
            <person name="Dalin E."/>
            <person name="Tice H."/>
            <person name="Pitluck S."/>
            <person name="Chain P."/>
            <person name="Malfatti S."/>
            <person name="Shin M."/>
            <person name="Vergez L."/>
            <person name="Schmutz J."/>
            <person name="Larimer F."/>
            <person name="Land M."/>
            <person name="Hauser L."/>
            <person name="Kyrpides N."/>
            <person name="Mikhailova N."/>
            <person name="Romine M.F."/>
            <person name="Fredrickson J."/>
            <person name="Tiedje J."/>
            <person name="Richardson P."/>
        </authorList>
    </citation>
    <scope>NUCLEOTIDE SEQUENCE [LARGE SCALE GENOMIC DNA]</scope>
    <source>
        <strain>CN-32 / ATCC BAA-453</strain>
    </source>
</reference>
<protein>
    <recommendedName>
        <fullName evidence="1">Elongation factor 4</fullName>
        <shortName evidence="1">EF-4</shortName>
        <ecNumber evidence="1">3.6.5.n1</ecNumber>
    </recommendedName>
    <alternativeName>
        <fullName evidence="1">Ribosomal back-translocase LepA</fullName>
    </alternativeName>
</protein>
<sequence length="596" mass="65933">MKHIRNFSIIAHIDHGKSTLSDRLIQVCGGLTDREMDSQVLDSMDLERERGITIKAQSVTLDYKAKDGQVYQLNFIDTPGHVDFSYEVSRSLAACEGALLVVDAGQGVEAQTLANCYTALDMNLDVVPILNKIDLPQADPERVAAEIEDIVGIDAMDAVRCSAKTGVGVDDVLEVIVAKIPPPEGDPDAPLQALIIDSWFDNYLGVVSLVRIKHGSLKKGDKFKVMSTGQNHTADRVGIFTPKQTDKTELKTGEVGFVIAGLKEIHGAPVGDTLTLAKNGADKPLPGFKKVKPQVYAGVFPISTDEYENFRDALNKLSLNDASLFFEPESSSALGFGFRIGYLGLLHMEIVQERLEREYNLELITTAPTVVYEVVMTNGETIYVDNPSDLPAINNIEEMREPIVEANILVPKEYLGNVITLCIEKRGTQVNMVYHGNQVAVTYHLPMAEVVMDFFDRLKSTSRGYASLEYNFIRFDPADMVRLDILINGDRVDALAMVIHRSNIRHRGLALVEKMKELIPRQMFDIAIQAAVGSQIIARSTVKALRKDVTAKCYGGDVSRKKKLLNKQKEGKKRMKQVGNVEVPQEAFLAVLKLNE</sequence>
<evidence type="ECO:0000255" key="1">
    <source>
        <dbReference type="HAMAP-Rule" id="MF_00071"/>
    </source>
</evidence>
<keyword id="KW-0997">Cell inner membrane</keyword>
<keyword id="KW-1003">Cell membrane</keyword>
<keyword id="KW-0342">GTP-binding</keyword>
<keyword id="KW-0378">Hydrolase</keyword>
<keyword id="KW-0472">Membrane</keyword>
<keyword id="KW-0547">Nucleotide-binding</keyword>
<keyword id="KW-0648">Protein biosynthesis</keyword>
<dbReference type="EC" id="3.6.5.n1" evidence="1"/>
<dbReference type="EMBL" id="CP000681">
    <property type="protein sequence ID" value="ABP74885.1"/>
    <property type="molecule type" value="Genomic_DNA"/>
</dbReference>
<dbReference type="SMR" id="A4Y4K2"/>
<dbReference type="STRING" id="319224.Sputcn32_1157"/>
<dbReference type="KEGG" id="spc:Sputcn32_1157"/>
<dbReference type="eggNOG" id="COG0481">
    <property type="taxonomic scope" value="Bacteria"/>
</dbReference>
<dbReference type="HOGENOM" id="CLU_009995_3_3_6"/>
<dbReference type="GO" id="GO:0005886">
    <property type="term" value="C:plasma membrane"/>
    <property type="evidence" value="ECO:0007669"/>
    <property type="project" value="UniProtKB-SubCell"/>
</dbReference>
<dbReference type="GO" id="GO:0005525">
    <property type="term" value="F:GTP binding"/>
    <property type="evidence" value="ECO:0007669"/>
    <property type="project" value="UniProtKB-UniRule"/>
</dbReference>
<dbReference type="GO" id="GO:0003924">
    <property type="term" value="F:GTPase activity"/>
    <property type="evidence" value="ECO:0007669"/>
    <property type="project" value="UniProtKB-UniRule"/>
</dbReference>
<dbReference type="GO" id="GO:0097216">
    <property type="term" value="F:guanosine tetraphosphate binding"/>
    <property type="evidence" value="ECO:0007669"/>
    <property type="project" value="UniProtKB-ARBA"/>
</dbReference>
<dbReference type="GO" id="GO:0043022">
    <property type="term" value="F:ribosome binding"/>
    <property type="evidence" value="ECO:0007669"/>
    <property type="project" value="UniProtKB-UniRule"/>
</dbReference>
<dbReference type="GO" id="GO:0003746">
    <property type="term" value="F:translation elongation factor activity"/>
    <property type="evidence" value="ECO:0007669"/>
    <property type="project" value="UniProtKB-UniRule"/>
</dbReference>
<dbReference type="GO" id="GO:0045727">
    <property type="term" value="P:positive regulation of translation"/>
    <property type="evidence" value="ECO:0007669"/>
    <property type="project" value="UniProtKB-UniRule"/>
</dbReference>
<dbReference type="CDD" id="cd03699">
    <property type="entry name" value="EF4_II"/>
    <property type="match status" value="1"/>
</dbReference>
<dbReference type="CDD" id="cd16260">
    <property type="entry name" value="EF4_III"/>
    <property type="match status" value="1"/>
</dbReference>
<dbReference type="CDD" id="cd01890">
    <property type="entry name" value="LepA"/>
    <property type="match status" value="1"/>
</dbReference>
<dbReference type="CDD" id="cd03709">
    <property type="entry name" value="lepA_C"/>
    <property type="match status" value="1"/>
</dbReference>
<dbReference type="FunFam" id="3.40.50.300:FF:000078">
    <property type="entry name" value="Elongation factor 4"/>
    <property type="match status" value="1"/>
</dbReference>
<dbReference type="FunFam" id="2.40.30.10:FF:000015">
    <property type="entry name" value="Translation factor GUF1, mitochondrial"/>
    <property type="match status" value="1"/>
</dbReference>
<dbReference type="FunFam" id="3.30.70.240:FF:000007">
    <property type="entry name" value="Translation factor GUF1, mitochondrial"/>
    <property type="match status" value="1"/>
</dbReference>
<dbReference type="FunFam" id="3.30.70.2570:FF:000001">
    <property type="entry name" value="Translation factor GUF1, mitochondrial"/>
    <property type="match status" value="1"/>
</dbReference>
<dbReference type="FunFam" id="3.30.70.870:FF:000004">
    <property type="entry name" value="Translation factor GUF1, mitochondrial"/>
    <property type="match status" value="1"/>
</dbReference>
<dbReference type="Gene3D" id="3.30.70.240">
    <property type="match status" value="1"/>
</dbReference>
<dbReference type="Gene3D" id="3.30.70.2570">
    <property type="entry name" value="Elongation factor 4, C-terminal domain"/>
    <property type="match status" value="1"/>
</dbReference>
<dbReference type="Gene3D" id="3.30.70.870">
    <property type="entry name" value="Elongation Factor G (Translational Gtpase), domain 3"/>
    <property type="match status" value="1"/>
</dbReference>
<dbReference type="Gene3D" id="3.40.50.300">
    <property type="entry name" value="P-loop containing nucleotide triphosphate hydrolases"/>
    <property type="match status" value="1"/>
</dbReference>
<dbReference type="Gene3D" id="2.40.30.10">
    <property type="entry name" value="Translation factors"/>
    <property type="match status" value="1"/>
</dbReference>
<dbReference type="HAMAP" id="MF_00071">
    <property type="entry name" value="LepA"/>
    <property type="match status" value="1"/>
</dbReference>
<dbReference type="InterPro" id="IPR006297">
    <property type="entry name" value="EF-4"/>
</dbReference>
<dbReference type="InterPro" id="IPR035647">
    <property type="entry name" value="EFG_III/V"/>
</dbReference>
<dbReference type="InterPro" id="IPR000640">
    <property type="entry name" value="EFG_V-like"/>
</dbReference>
<dbReference type="InterPro" id="IPR004161">
    <property type="entry name" value="EFTu-like_2"/>
</dbReference>
<dbReference type="InterPro" id="IPR031157">
    <property type="entry name" value="G_TR_CS"/>
</dbReference>
<dbReference type="InterPro" id="IPR038363">
    <property type="entry name" value="LepA_C_sf"/>
</dbReference>
<dbReference type="InterPro" id="IPR013842">
    <property type="entry name" value="LepA_CTD"/>
</dbReference>
<dbReference type="InterPro" id="IPR035654">
    <property type="entry name" value="LepA_IV"/>
</dbReference>
<dbReference type="InterPro" id="IPR027417">
    <property type="entry name" value="P-loop_NTPase"/>
</dbReference>
<dbReference type="InterPro" id="IPR005225">
    <property type="entry name" value="Small_GTP-bd"/>
</dbReference>
<dbReference type="InterPro" id="IPR000795">
    <property type="entry name" value="T_Tr_GTP-bd_dom"/>
</dbReference>
<dbReference type="InterPro" id="IPR009000">
    <property type="entry name" value="Transl_B-barrel_sf"/>
</dbReference>
<dbReference type="NCBIfam" id="TIGR01393">
    <property type="entry name" value="lepA"/>
    <property type="match status" value="1"/>
</dbReference>
<dbReference type="NCBIfam" id="TIGR00231">
    <property type="entry name" value="small_GTP"/>
    <property type="match status" value="1"/>
</dbReference>
<dbReference type="PANTHER" id="PTHR43512:SF4">
    <property type="entry name" value="TRANSLATION FACTOR GUF1 HOMOLOG, CHLOROPLASTIC"/>
    <property type="match status" value="1"/>
</dbReference>
<dbReference type="PANTHER" id="PTHR43512">
    <property type="entry name" value="TRANSLATION FACTOR GUF1-RELATED"/>
    <property type="match status" value="1"/>
</dbReference>
<dbReference type="Pfam" id="PF00679">
    <property type="entry name" value="EFG_C"/>
    <property type="match status" value="1"/>
</dbReference>
<dbReference type="Pfam" id="PF00009">
    <property type="entry name" value="GTP_EFTU"/>
    <property type="match status" value="1"/>
</dbReference>
<dbReference type="Pfam" id="PF03144">
    <property type="entry name" value="GTP_EFTU_D2"/>
    <property type="match status" value="1"/>
</dbReference>
<dbReference type="Pfam" id="PF06421">
    <property type="entry name" value="LepA_C"/>
    <property type="match status" value="1"/>
</dbReference>
<dbReference type="PRINTS" id="PR00315">
    <property type="entry name" value="ELONGATNFCT"/>
</dbReference>
<dbReference type="SMART" id="SM00838">
    <property type="entry name" value="EFG_C"/>
    <property type="match status" value="1"/>
</dbReference>
<dbReference type="SUPFAM" id="SSF54980">
    <property type="entry name" value="EF-G C-terminal domain-like"/>
    <property type="match status" value="2"/>
</dbReference>
<dbReference type="SUPFAM" id="SSF52540">
    <property type="entry name" value="P-loop containing nucleoside triphosphate hydrolases"/>
    <property type="match status" value="1"/>
</dbReference>
<dbReference type="SUPFAM" id="SSF50447">
    <property type="entry name" value="Translation proteins"/>
    <property type="match status" value="1"/>
</dbReference>
<dbReference type="PROSITE" id="PS00301">
    <property type="entry name" value="G_TR_1"/>
    <property type="match status" value="1"/>
</dbReference>
<dbReference type="PROSITE" id="PS51722">
    <property type="entry name" value="G_TR_2"/>
    <property type="match status" value="1"/>
</dbReference>
<name>LEPA_SHEPC</name>
<proteinExistence type="inferred from homology"/>
<gene>
    <name evidence="1" type="primary">lepA</name>
    <name type="ordered locus">Sputcn32_1157</name>
</gene>
<organism>
    <name type="scientific">Shewanella putrefaciens (strain CN-32 / ATCC BAA-453)</name>
    <dbReference type="NCBI Taxonomy" id="319224"/>
    <lineage>
        <taxon>Bacteria</taxon>
        <taxon>Pseudomonadati</taxon>
        <taxon>Pseudomonadota</taxon>
        <taxon>Gammaproteobacteria</taxon>
        <taxon>Alteromonadales</taxon>
        <taxon>Shewanellaceae</taxon>
        <taxon>Shewanella</taxon>
    </lineage>
</organism>